<protein>
    <recommendedName>
        <fullName evidence="11">Synaptogyrin-1</fullName>
    </recommendedName>
    <alternativeName>
        <fullName evidence="10">p29</fullName>
    </alternativeName>
</protein>
<keyword id="KW-0007">Acetylation</keyword>
<keyword id="KW-0968">Cytoplasmic vesicle</keyword>
<keyword id="KW-0472">Membrane</keyword>
<keyword id="KW-1185">Reference proteome</keyword>
<keyword id="KW-0770">Synapse</keyword>
<keyword id="KW-0812">Transmembrane</keyword>
<keyword id="KW-1133">Transmembrane helix</keyword>
<dbReference type="EMBL" id="U39549">
    <property type="protein sequence ID" value="AAB17890.1"/>
    <property type="molecule type" value="mRNA"/>
</dbReference>
<dbReference type="RefSeq" id="NP_062039.1">
    <property type="nucleotide sequence ID" value="NM_019166.2"/>
</dbReference>
<dbReference type="SMR" id="Q62876"/>
<dbReference type="BioGRID" id="247883">
    <property type="interactions" value="2"/>
</dbReference>
<dbReference type="FunCoup" id="Q62876">
    <property type="interactions" value="1292"/>
</dbReference>
<dbReference type="IntAct" id="Q62876">
    <property type="interactions" value="1"/>
</dbReference>
<dbReference type="MINT" id="Q62876"/>
<dbReference type="STRING" id="10116.ENSRNOP00000023066"/>
<dbReference type="GlyGen" id="Q62876">
    <property type="glycosylation" value="1 site"/>
</dbReference>
<dbReference type="PhosphoSitePlus" id="Q62876"/>
<dbReference type="PaxDb" id="10116-ENSRNOP00000023066"/>
<dbReference type="Ensembl" id="ENSRNOT00000023066.6">
    <property type="protein sequence ID" value="ENSRNOP00000023066.3"/>
    <property type="gene ID" value="ENSRNOG00000017108.8"/>
</dbReference>
<dbReference type="GeneID" id="29205"/>
<dbReference type="KEGG" id="rno:29205"/>
<dbReference type="UCSC" id="RGD:3801">
    <property type="organism name" value="rat"/>
</dbReference>
<dbReference type="AGR" id="RGD:3801"/>
<dbReference type="CTD" id="9145"/>
<dbReference type="RGD" id="3801">
    <property type="gene designation" value="Syngr1"/>
</dbReference>
<dbReference type="eggNOG" id="KOG4016">
    <property type="taxonomic scope" value="Eukaryota"/>
</dbReference>
<dbReference type="GeneTree" id="ENSGT00950000182935"/>
<dbReference type="HOGENOM" id="CLU_079186_0_1_1"/>
<dbReference type="InParanoid" id="Q62876"/>
<dbReference type="OrthoDB" id="10041611at2759"/>
<dbReference type="PhylomeDB" id="Q62876"/>
<dbReference type="TreeFam" id="TF320995"/>
<dbReference type="Reactome" id="R-RNO-6798695">
    <property type="pathway name" value="Neutrophil degranulation"/>
</dbReference>
<dbReference type="PRO" id="PR:Q62876"/>
<dbReference type="Proteomes" id="UP000002494">
    <property type="component" value="Chromosome 7"/>
</dbReference>
<dbReference type="Bgee" id="ENSRNOG00000017108">
    <property type="expression patterns" value="Expressed in frontal cortex and 19 other cell types or tissues"/>
</dbReference>
<dbReference type="ExpressionAtlas" id="Q62876">
    <property type="expression patterns" value="baseline and differential"/>
</dbReference>
<dbReference type="GO" id="GO:0042470">
    <property type="term" value="C:melanosome"/>
    <property type="evidence" value="ECO:0007669"/>
    <property type="project" value="UniProtKB-SubCell"/>
</dbReference>
<dbReference type="GO" id="GO:0031594">
    <property type="term" value="C:neuromuscular junction"/>
    <property type="evidence" value="ECO:0000318"/>
    <property type="project" value="GO_Central"/>
</dbReference>
<dbReference type="GO" id="GO:0098685">
    <property type="term" value="C:Schaffer collateral - CA1 synapse"/>
    <property type="evidence" value="ECO:0000266"/>
    <property type="project" value="RGD"/>
</dbReference>
<dbReference type="GO" id="GO:0008021">
    <property type="term" value="C:synaptic vesicle"/>
    <property type="evidence" value="ECO:0000314"/>
    <property type="project" value="MGI"/>
</dbReference>
<dbReference type="GO" id="GO:0030672">
    <property type="term" value="C:synaptic vesicle membrane"/>
    <property type="evidence" value="ECO:0000314"/>
    <property type="project" value="RGD"/>
</dbReference>
<dbReference type="GO" id="GO:0043195">
    <property type="term" value="C:terminal bouton"/>
    <property type="evidence" value="ECO:0007005"/>
    <property type="project" value="ParkinsonsUK-UCL"/>
</dbReference>
<dbReference type="GO" id="GO:1990830">
    <property type="term" value="P:cellular response to leukemia inhibitory factor"/>
    <property type="evidence" value="ECO:0000266"/>
    <property type="project" value="RGD"/>
</dbReference>
<dbReference type="GO" id="GO:0050804">
    <property type="term" value="P:modulation of chemical synaptic transmission"/>
    <property type="evidence" value="ECO:0000266"/>
    <property type="project" value="RGD"/>
</dbReference>
<dbReference type="GO" id="GO:0006605">
    <property type="term" value="P:protein targeting"/>
    <property type="evidence" value="ECO:0000314"/>
    <property type="project" value="MGI"/>
</dbReference>
<dbReference type="GO" id="GO:0045055">
    <property type="term" value="P:regulated exocytosis"/>
    <property type="evidence" value="ECO:0000315"/>
    <property type="project" value="UniProtKB"/>
</dbReference>
<dbReference type="GO" id="GO:0048169">
    <property type="term" value="P:regulation of long-term neuronal synaptic plasticity"/>
    <property type="evidence" value="ECO:0000266"/>
    <property type="project" value="RGD"/>
</dbReference>
<dbReference type="GO" id="GO:0048172">
    <property type="term" value="P:regulation of short-term neuronal synaptic plasticity"/>
    <property type="evidence" value="ECO:0000266"/>
    <property type="project" value="RGD"/>
</dbReference>
<dbReference type="GO" id="GO:0048499">
    <property type="term" value="P:synaptic vesicle membrane organization"/>
    <property type="evidence" value="ECO:0000315"/>
    <property type="project" value="UniProtKB"/>
</dbReference>
<dbReference type="InterPro" id="IPR008253">
    <property type="entry name" value="Marvel"/>
</dbReference>
<dbReference type="InterPro" id="IPR016579">
    <property type="entry name" value="Synaptogyrin"/>
</dbReference>
<dbReference type="PANTHER" id="PTHR10838">
    <property type="entry name" value="SYNAPTOGYRIN"/>
    <property type="match status" value="1"/>
</dbReference>
<dbReference type="PANTHER" id="PTHR10838:SF7">
    <property type="entry name" value="SYNAPTOGYRIN-1"/>
    <property type="match status" value="1"/>
</dbReference>
<dbReference type="Pfam" id="PF01284">
    <property type="entry name" value="MARVEL"/>
    <property type="match status" value="1"/>
</dbReference>
<dbReference type="PIRSF" id="PIRSF011282">
    <property type="entry name" value="Synaptogyrin"/>
    <property type="match status" value="1"/>
</dbReference>
<dbReference type="PROSITE" id="PS51225">
    <property type="entry name" value="MARVEL"/>
    <property type="match status" value="1"/>
</dbReference>
<proteinExistence type="evidence at protein level"/>
<sequence>MEGGAYGAGKAGGAFDPYTLVRQPHTILRVVSWVFSIVVFGSIVNEGYLNNPEEEEEFCIYNRNPNACSYGVTVGVLAFLTCLVYLALDVYFPQISSVKDRKKAVLSDIGVSAFWAFFWFVGFCFLANQWQVSKPKDNPLNEGTDAARAAIAFSFFSIFTWAGQAVLAFQRYQIGADSALFSQDYMDPSQDSSMPYAPYVEPSAGSDPTGMGGTYQHPANAFDAEPQGYQSQGY</sequence>
<gene>
    <name evidence="12" type="primary">Syngr1</name>
</gene>
<comment type="function">
    <text evidence="2 6 7 8">May play a role in regulated exocytosis (PubMed:10383386). Modulates the localization of synaptophysin/SYP into synaptic-like microvesicles and may therefore play a role in synaptic-like microvesicle formation and/or maturation (PubMed:12928441, PubMed:15590695). Involved in the regulation of short-term and long-term synaptic plasticity (By similarity).</text>
</comment>
<comment type="subcellular location">
    <subcellularLocation>
        <location evidence="7 9">Cytoplasmic vesicle</location>
        <location evidence="7 9">Secretory vesicle</location>
        <location evidence="7 9">Synaptic vesicle membrane</location>
        <topology evidence="9">Multi-pass membrane protein</topology>
    </subcellularLocation>
    <subcellularLocation>
        <location evidence="1">Melanosome</location>
    </subcellularLocation>
</comment>
<comment type="tissue specificity">
    <text evidence="9">Nervous system (at protein level).</text>
</comment>
<comment type="similarity">
    <text evidence="11">Belongs to the synaptogyrin family.</text>
</comment>
<accession>Q62876</accession>
<reference key="1">
    <citation type="journal article" date="1995" name="J. Cell Biol.">
        <title>Structure of synaptogyrin (p29) defines novel synaptic vesicle protein.</title>
        <authorList>
            <person name="Stenius K."/>
            <person name="Janz R."/>
            <person name="Suedhof T.C."/>
            <person name="Jahn R."/>
        </authorList>
    </citation>
    <scope>NUCLEOTIDE SEQUENCE [MRNA]</scope>
    <scope>SUBCELLULAR LOCATION</scope>
    <scope>TOPOLOGY</scope>
</reference>
<reference key="2">
    <citation type="journal article" date="1999" name="J. Biol. Chem.">
        <title>Synaptogyrins regulate Ca2+-dependent exocytosis in PC12 cells.</title>
        <authorList>
            <person name="Sugita S."/>
            <person name="Janz R."/>
            <person name="Suedhof T.C."/>
        </authorList>
    </citation>
    <scope>FUNCTION</scope>
</reference>
<reference key="3">
    <citation type="journal article" date="2003" name="J. Biol. Chem.">
        <title>Cellugyrin and synaptogyrin facilitate targeting of synaptophysin to a ubiquitous synaptic vesicle-sized compartment in PC12 cells.</title>
        <authorList>
            <person name="Belfort G.M."/>
            <person name="Kandror K.V."/>
        </authorList>
    </citation>
    <scope>FUNCTION</scope>
    <scope>SUBCELLULAR LOCATION</scope>
</reference>
<reference key="4">
    <citation type="journal article" date="2005" name="J. Biol. Chem.">
        <title>Cellugyrin induces biogenesis of synaptic-like microvesicles in PC12 cells.</title>
        <authorList>
            <person name="Belfort G.M."/>
            <person name="Bakirtzi K."/>
            <person name="Kandror K.V."/>
        </authorList>
    </citation>
    <scope>FUNCTION</scope>
</reference>
<feature type="chain" id="PRO_0000183992" description="Synaptogyrin-1">
    <location>
        <begin position="1"/>
        <end position="234"/>
    </location>
</feature>
<feature type="topological domain" description="Cytoplasmic" evidence="9">
    <location>
        <begin position="1"/>
        <end position="23"/>
    </location>
</feature>
<feature type="transmembrane region" description="Helical" evidence="3">
    <location>
        <begin position="24"/>
        <end position="44"/>
    </location>
</feature>
<feature type="topological domain" description="Lumenal" evidence="9">
    <location>
        <begin position="45"/>
        <end position="71"/>
    </location>
</feature>
<feature type="transmembrane region" description="Helical" evidence="3">
    <location>
        <begin position="72"/>
        <end position="92"/>
    </location>
</feature>
<feature type="topological domain" description="Cytoplasmic" evidence="9">
    <location>
        <begin position="93"/>
        <end position="104"/>
    </location>
</feature>
<feature type="transmembrane region" description="Helical" evidence="3">
    <location>
        <begin position="105"/>
        <end position="125"/>
    </location>
</feature>
<feature type="topological domain" description="Lumenal" evidence="9">
    <location>
        <begin position="126"/>
        <end position="148"/>
    </location>
</feature>
<feature type="transmembrane region" description="Helical" evidence="3">
    <location>
        <begin position="149"/>
        <end position="169"/>
    </location>
</feature>
<feature type="topological domain" description="Cytoplasmic" evidence="9">
    <location>
        <begin position="170"/>
        <end position="234"/>
    </location>
</feature>
<feature type="domain" description="MARVEL" evidence="4">
    <location>
        <begin position="20"/>
        <end position="173"/>
    </location>
</feature>
<feature type="region of interest" description="Disordered" evidence="5">
    <location>
        <begin position="201"/>
        <end position="234"/>
    </location>
</feature>
<feature type="modified residue" description="N-acetylmethionine" evidence="1">
    <location>
        <position position="1"/>
    </location>
</feature>
<name>SNG1_RAT</name>
<organism>
    <name type="scientific">Rattus norvegicus</name>
    <name type="common">Rat</name>
    <dbReference type="NCBI Taxonomy" id="10116"/>
    <lineage>
        <taxon>Eukaryota</taxon>
        <taxon>Metazoa</taxon>
        <taxon>Chordata</taxon>
        <taxon>Craniata</taxon>
        <taxon>Vertebrata</taxon>
        <taxon>Euteleostomi</taxon>
        <taxon>Mammalia</taxon>
        <taxon>Eutheria</taxon>
        <taxon>Euarchontoglires</taxon>
        <taxon>Glires</taxon>
        <taxon>Rodentia</taxon>
        <taxon>Myomorpha</taxon>
        <taxon>Muroidea</taxon>
        <taxon>Muridae</taxon>
        <taxon>Murinae</taxon>
        <taxon>Rattus</taxon>
    </lineage>
</organism>
<evidence type="ECO:0000250" key="1">
    <source>
        <dbReference type="UniProtKB" id="O43759"/>
    </source>
</evidence>
<evidence type="ECO:0000250" key="2">
    <source>
        <dbReference type="UniProtKB" id="O55100"/>
    </source>
</evidence>
<evidence type="ECO:0000255" key="3"/>
<evidence type="ECO:0000255" key="4">
    <source>
        <dbReference type="PROSITE-ProRule" id="PRU00581"/>
    </source>
</evidence>
<evidence type="ECO:0000256" key="5">
    <source>
        <dbReference type="SAM" id="MobiDB-lite"/>
    </source>
</evidence>
<evidence type="ECO:0000269" key="6">
    <source>
    </source>
</evidence>
<evidence type="ECO:0000269" key="7">
    <source>
    </source>
</evidence>
<evidence type="ECO:0000269" key="8">
    <source>
    </source>
</evidence>
<evidence type="ECO:0000269" key="9">
    <source>
    </source>
</evidence>
<evidence type="ECO:0000303" key="10">
    <source>
    </source>
</evidence>
<evidence type="ECO:0000305" key="11"/>
<evidence type="ECO:0000312" key="12">
    <source>
        <dbReference type="RGD" id="3801"/>
    </source>
</evidence>